<protein>
    <recommendedName>
        <fullName>Kunitz-type serine protease inhibitor bitisilin-1</fullName>
    </recommendedName>
    <alternativeName>
        <fullName>BG-11</fullName>
    </alternativeName>
    <alternativeName>
        <fullName>Kunitz protease inhibitor 1</fullName>
    </alternativeName>
</protein>
<comment type="function">
    <text evidence="1">Serine protease inhibitor.</text>
</comment>
<comment type="subcellular location">
    <subcellularLocation>
        <location evidence="1">Secreted</location>
    </subcellularLocation>
</comment>
<comment type="tissue specificity">
    <text>Expressed by the venom gland.</text>
</comment>
<comment type="similarity">
    <text evidence="4">Belongs to the venom Kunitz-type family.</text>
</comment>
<reference key="1">
    <citation type="journal article" date="2004" name="Gene">
        <title>Bitis gabonica (Gaboon viper) snake venom gland: toward a catalog for the full-length transcripts (cDNA) and proteins.</title>
        <authorList>
            <person name="Francischetti I.M.B."/>
            <person name="My-Pham V."/>
            <person name="Harrison J."/>
            <person name="Garfield M.K."/>
            <person name="Ribeiro J.M.C."/>
        </authorList>
    </citation>
    <scope>NUCLEOTIDE SEQUENCE [MRNA]</scope>
    <scope>PROTEIN SEQUENCE OF 25-43</scope>
    <source>
        <tissue>Venom</tissue>
        <tissue>Venom gland</tissue>
    </source>
</reference>
<evidence type="ECO:0000250" key="1"/>
<evidence type="ECO:0000255" key="2">
    <source>
        <dbReference type="PROSITE-ProRule" id="PRU00031"/>
    </source>
</evidence>
<evidence type="ECO:0000269" key="3">
    <source>
    </source>
</evidence>
<evidence type="ECO:0000305" key="4"/>
<keyword id="KW-0903">Direct protein sequencing</keyword>
<keyword id="KW-1015">Disulfide bond</keyword>
<keyword id="KW-0646">Protease inhibitor</keyword>
<keyword id="KW-0964">Secreted</keyword>
<keyword id="KW-0722">Serine protease inhibitor</keyword>
<keyword id="KW-0732">Signal</keyword>
<organism>
    <name type="scientific">Bitis gabonica</name>
    <name type="common">Gaboon adder</name>
    <name type="synonym">Gaboon viper</name>
    <dbReference type="NCBI Taxonomy" id="8694"/>
    <lineage>
        <taxon>Eukaryota</taxon>
        <taxon>Metazoa</taxon>
        <taxon>Chordata</taxon>
        <taxon>Craniata</taxon>
        <taxon>Vertebrata</taxon>
        <taxon>Euteleostomi</taxon>
        <taxon>Lepidosauria</taxon>
        <taxon>Squamata</taxon>
        <taxon>Bifurcata</taxon>
        <taxon>Unidentata</taxon>
        <taxon>Episquamata</taxon>
        <taxon>Toxicofera</taxon>
        <taxon>Serpentes</taxon>
        <taxon>Colubroidea</taxon>
        <taxon>Viperidae</taxon>
        <taxon>Viperinae</taxon>
        <taxon>Bitis</taxon>
    </lineage>
</organism>
<accession>Q6T6T5</accession>
<dbReference type="EMBL" id="AY430402">
    <property type="protein sequence ID" value="AAR24526.1"/>
    <property type="molecule type" value="mRNA"/>
</dbReference>
<dbReference type="SMR" id="Q6T6T5"/>
<dbReference type="MEROPS" id="I02.062"/>
<dbReference type="GO" id="GO:0005615">
    <property type="term" value="C:extracellular space"/>
    <property type="evidence" value="ECO:0007669"/>
    <property type="project" value="TreeGrafter"/>
</dbReference>
<dbReference type="GO" id="GO:0004867">
    <property type="term" value="F:serine-type endopeptidase inhibitor activity"/>
    <property type="evidence" value="ECO:0007669"/>
    <property type="project" value="UniProtKB-KW"/>
</dbReference>
<dbReference type="CDD" id="cd22608">
    <property type="entry name" value="Kunitz_PPTI-like"/>
    <property type="match status" value="1"/>
</dbReference>
<dbReference type="FunFam" id="4.10.410.10:FF:000004">
    <property type="entry name" value="Tissue factor pathway inhibitor"/>
    <property type="match status" value="1"/>
</dbReference>
<dbReference type="Gene3D" id="4.10.410.10">
    <property type="entry name" value="Pancreatic trypsin inhibitor Kunitz domain"/>
    <property type="match status" value="1"/>
</dbReference>
<dbReference type="InterPro" id="IPR002223">
    <property type="entry name" value="Kunitz_BPTI"/>
</dbReference>
<dbReference type="InterPro" id="IPR036880">
    <property type="entry name" value="Kunitz_BPTI_sf"/>
</dbReference>
<dbReference type="InterPro" id="IPR020901">
    <property type="entry name" value="Prtase_inh_Kunz-CS"/>
</dbReference>
<dbReference type="InterPro" id="IPR050098">
    <property type="entry name" value="TFPI/VKTCI-like"/>
</dbReference>
<dbReference type="PANTHER" id="PTHR10083:SF374">
    <property type="entry name" value="BPTI_KUNITZ INHIBITOR DOMAIN-CONTAINING PROTEIN"/>
    <property type="match status" value="1"/>
</dbReference>
<dbReference type="PANTHER" id="PTHR10083">
    <property type="entry name" value="KUNITZ-TYPE PROTEASE INHIBITOR-RELATED"/>
    <property type="match status" value="1"/>
</dbReference>
<dbReference type="Pfam" id="PF00014">
    <property type="entry name" value="Kunitz_BPTI"/>
    <property type="match status" value="1"/>
</dbReference>
<dbReference type="PRINTS" id="PR00759">
    <property type="entry name" value="BASICPTASE"/>
</dbReference>
<dbReference type="SMART" id="SM00131">
    <property type="entry name" value="KU"/>
    <property type="match status" value="1"/>
</dbReference>
<dbReference type="SUPFAM" id="SSF57362">
    <property type="entry name" value="BPTI-like"/>
    <property type="match status" value="1"/>
</dbReference>
<dbReference type="PROSITE" id="PS00280">
    <property type="entry name" value="BPTI_KUNITZ_1"/>
    <property type="match status" value="1"/>
</dbReference>
<dbReference type="PROSITE" id="PS50279">
    <property type="entry name" value="BPTI_KUNITZ_2"/>
    <property type="match status" value="1"/>
</dbReference>
<proteinExistence type="evidence at protein level"/>
<sequence length="90" mass="9923">MSSGGLLLLLGLLTLWAELTPVSGKNRPEFCNLPADTGPCKAYEPRFYYDSVSKECQKFTYGGCKGNSNNFESMDECRKTCVASATRRPT</sequence>
<feature type="signal peptide" evidence="3">
    <location>
        <begin position="1"/>
        <end position="24"/>
    </location>
</feature>
<feature type="chain" id="PRO_0000376868" description="Kunitz-type serine protease inhibitor bitisilin-1">
    <location>
        <begin position="25"/>
        <end position="90"/>
    </location>
</feature>
<feature type="domain" description="BPTI/Kunitz inhibitor" evidence="2">
    <location>
        <begin position="31"/>
        <end position="81"/>
    </location>
</feature>
<feature type="site" description="Reactive bond for trypsin" evidence="1">
    <location>
        <begin position="41"/>
        <end position="42"/>
    </location>
</feature>
<feature type="disulfide bond" evidence="2">
    <location>
        <begin position="31"/>
        <end position="81"/>
    </location>
</feature>
<feature type="disulfide bond" evidence="2">
    <location>
        <begin position="40"/>
        <end position="64"/>
    </location>
</feature>
<feature type="disulfide bond" evidence="2">
    <location>
        <begin position="56"/>
        <end position="77"/>
    </location>
</feature>
<name>VKT1_BITGA</name>